<proteinExistence type="evidence at protein level"/>
<comment type="function">
    <text evidence="1">Catalyzes the phosphorylation of the 3'-hydroxyl group of dephosphocoenzyme A to form coenzyme A.</text>
</comment>
<comment type="catalytic activity">
    <reaction evidence="1">
        <text>3'-dephospho-CoA + ATP = ADP + CoA + H(+)</text>
        <dbReference type="Rhea" id="RHEA:18245"/>
        <dbReference type="ChEBI" id="CHEBI:15378"/>
        <dbReference type="ChEBI" id="CHEBI:30616"/>
        <dbReference type="ChEBI" id="CHEBI:57287"/>
        <dbReference type="ChEBI" id="CHEBI:57328"/>
        <dbReference type="ChEBI" id="CHEBI:456216"/>
        <dbReference type="EC" id="2.7.1.24"/>
    </reaction>
</comment>
<comment type="pathway">
    <text evidence="1">Cofactor biosynthesis; coenzyme A biosynthesis; CoA from (R)-pantothenate: step 5/5.</text>
</comment>
<comment type="subcellular location">
    <subcellularLocation>
        <location evidence="1">Cytoplasm</location>
    </subcellularLocation>
</comment>
<comment type="similarity">
    <text evidence="1 2">Belongs to the CoaE family.</text>
</comment>
<comment type="sequence caution" evidence="2">
    <conflict type="erroneous initiation">
        <sequence resource="EMBL-CDS" id="AAC22550"/>
    </conflict>
</comment>
<sequence>MTYIVGLTGGIGSGKTTIANLFTDLGVPLVDADVVAREVVAKDSPLLSKIVEHFGAQILTEQGELNRAALRERVFNHDEDKLWLNNLLHPAIRERMKQKLAEQTAPYTLFVVPLLIENKLTALCDRILVVDVSPQTQLARSAQRDNNNFEQIQRIMNSQVSQQERLKWADDVINNDAELAQNLPHLQQKVLELHQFYLQQAENKNA</sequence>
<evidence type="ECO:0000255" key="1">
    <source>
        <dbReference type="HAMAP-Rule" id="MF_00376"/>
    </source>
</evidence>
<evidence type="ECO:0000305" key="2"/>
<evidence type="ECO:0007829" key="3">
    <source>
        <dbReference type="PDB" id="1JJV"/>
    </source>
</evidence>
<name>COAE_HAEIN</name>
<feature type="chain" id="PRO_0000172947" description="Dephospho-CoA kinase">
    <location>
        <begin position="1"/>
        <end position="206"/>
    </location>
</feature>
<feature type="domain" description="DPCK" evidence="1">
    <location>
        <begin position="4"/>
        <end position="204"/>
    </location>
</feature>
<feature type="binding site" evidence="1">
    <location>
        <begin position="12"/>
        <end position="17"/>
    </location>
    <ligand>
        <name>ATP</name>
        <dbReference type="ChEBI" id="CHEBI:30616"/>
    </ligand>
</feature>
<feature type="strand" evidence="3">
    <location>
        <begin position="3"/>
        <end position="8"/>
    </location>
</feature>
<feature type="helix" evidence="3">
    <location>
        <begin position="15"/>
        <end position="23"/>
    </location>
</feature>
<feature type="turn" evidence="3">
    <location>
        <begin position="24"/>
        <end position="26"/>
    </location>
</feature>
<feature type="strand" evidence="3">
    <location>
        <begin position="29"/>
        <end position="31"/>
    </location>
</feature>
<feature type="helix" evidence="3">
    <location>
        <begin position="32"/>
        <end position="38"/>
    </location>
</feature>
<feature type="helix" evidence="3">
    <location>
        <begin position="45"/>
        <end position="54"/>
    </location>
</feature>
<feature type="helix" evidence="3">
    <location>
        <begin position="67"/>
        <end position="75"/>
    </location>
</feature>
<feature type="helix" evidence="3">
    <location>
        <begin position="78"/>
        <end position="101"/>
    </location>
</feature>
<feature type="strand" evidence="3">
    <location>
        <begin position="105"/>
        <end position="111"/>
    </location>
</feature>
<feature type="turn" evidence="3">
    <location>
        <begin position="113"/>
        <end position="119"/>
    </location>
</feature>
<feature type="helix" evidence="3">
    <location>
        <begin position="121"/>
        <end position="123"/>
    </location>
</feature>
<feature type="strand" evidence="3">
    <location>
        <begin position="125"/>
        <end position="131"/>
    </location>
</feature>
<feature type="helix" evidence="3">
    <location>
        <begin position="134"/>
        <end position="141"/>
    </location>
</feature>
<feature type="helix" evidence="3">
    <location>
        <begin position="149"/>
        <end position="158"/>
    </location>
</feature>
<feature type="helix" evidence="3">
    <location>
        <begin position="162"/>
        <end position="168"/>
    </location>
</feature>
<feature type="strand" evidence="3">
    <location>
        <begin position="170"/>
        <end position="174"/>
    </location>
</feature>
<feature type="helix" evidence="3">
    <location>
        <begin position="179"/>
        <end position="203"/>
    </location>
</feature>
<keyword id="KW-0002">3D-structure</keyword>
<keyword id="KW-0067">ATP-binding</keyword>
<keyword id="KW-0173">Coenzyme A biosynthesis</keyword>
<keyword id="KW-0963">Cytoplasm</keyword>
<keyword id="KW-0418">Kinase</keyword>
<keyword id="KW-0547">Nucleotide-binding</keyword>
<keyword id="KW-1185">Reference proteome</keyword>
<keyword id="KW-0808">Transferase</keyword>
<organism>
    <name type="scientific">Haemophilus influenzae (strain ATCC 51907 / DSM 11121 / KW20 / Rd)</name>
    <dbReference type="NCBI Taxonomy" id="71421"/>
    <lineage>
        <taxon>Bacteria</taxon>
        <taxon>Pseudomonadati</taxon>
        <taxon>Pseudomonadota</taxon>
        <taxon>Gammaproteobacteria</taxon>
        <taxon>Pasteurellales</taxon>
        <taxon>Pasteurellaceae</taxon>
        <taxon>Haemophilus</taxon>
    </lineage>
</organism>
<gene>
    <name evidence="1" type="primary">coaE</name>
    <name type="ordered locus">HI_0890</name>
</gene>
<accession>P44920</accession>
<dbReference type="EC" id="2.7.1.24" evidence="1"/>
<dbReference type="EMBL" id="L42023">
    <property type="protein sequence ID" value="AAC22550.1"/>
    <property type="status" value="ALT_INIT"/>
    <property type="molecule type" value="Genomic_DNA"/>
</dbReference>
<dbReference type="PIR" id="A64161">
    <property type="entry name" value="A64161"/>
</dbReference>
<dbReference type="RefSeq" id="NP_439051.1">
    <property type="nucleotide sequence ID" value="NC_000907.1"/>
</dbReference>
<dbReference type="PDB" id="1JJV">
    <property type="method" value="X-ray"/>
    <property type="resolution" value="2.00 A"/>
    <property type="chains" value="A=1-206"/>
</dbReference>
<dbReference type="PDBsum" id="1JJV"/>
<dbReference type="SMR" id="P44920"/>
<dbReference type="STRING" id="71421.HI_0890"/>
<dbReference type="EnsemblBacteria" id="AAC22550">
    <property type="protein sequence ID" value="AAC22550"/>
    <property type="gene ID" value="HI_0890"/>
</dbReference>
<dbReference type="KEGG" id="hin:HI_0890"/>
<dbReference type="PATRIC" id="fig|71421.8.peg.932"/>
<dbReference type="eggNOG" id="COG0237">
    <property type="taxonomic scope" value="Bacteria"/>
</dbReference>
<dbReference type="HOGENOM" id="CLU_057180_1_2_6"/>
<dbReference type="OrthoDB" id="9812943at2"/>
<dbReference type="PhylomeDB" id="P44920"/>
<dbReference type="BioCyc" id="HINF71421:G1GJ1-930-MONOMER"/>
<dbReference type="BRENDA" id="2.7.1.24">
    <property type="organism ID" value="2529"/>
</dbReference>
<dbReference type="UniPathway" id="UPA00241">
    <property type="reaction ID" value="UER00356"/>
</dbReference>
<dbReference type="EvolutionaryTrace" id="P44920"/>
<dbReference type="Proteomes" id="UP000000579">
    <property type="component" value="Chromosome"/>
</dbReference>
<dbReference type="GO" id="GO:0005737">
    <property type="term" value="C:cytoplasm"/>
    <property type="evidence" value="ECO:0007669"/>
    <property type="project" value="UniProtKB-SubCell"/>
</dbReference>
<dbReference type="GO" id="GO:0005524">
    <property type="term" value="F:ATP binding"/>
    <property type="evidence" value="ECO:0007669"/>
    <property type="project" value="UniProtKB-UniRule"/>
</dbReference>
<dbReference type="GO" id="GO:0004140">
    <property type="term" value="F:dephospho-CoA kinase activity"/>
    <property type="evidence" value="ECO:0000318"/>
    <property type="project" value="GO_Central"/>
</dbReference>
<dbReference type="GO" id="GO:0015937">
    <property type="term" value="P:coenzyme A biosynthetic process"/>
    <property type="evidence" value="ECO:0000318"/>
    <property type="project" value="GO_Central"/>
</dbReference>
<dbReference type="CDD" id="cd02022">
    <property type="entry name" value="DPCK"/>
    <property type="match status" value="1"/>
</dbReference>
<dbReference type="FunFam" id="3.40.50.300:FF:000518">
    <property type="entry name" value="Dephospho-CoA kinase"/>
    <property type="match status" value="1"/>
</dbReference>
<dbReference type="Gene3D" id="3.40.50.300">
    <property type="entry name" value="P-loop containing nucleotide triphosphate hydrolases"/>
    <property type="match status" value="1"/>
</dbReference>
<dbReference type="HAMAP" id="MF_00376">
    <property type="entry name" value="Dephospho_CoA_kinase"/>
    <property type="match status" value="1"/>
</dbReference>
<dbReference type="InterPro" id="IPR001977">
    <property type="entry name" value="Depp_CoAkinase"/>
</dbReference>
<dbReference type="InterPro" id="IPR027417">
    <property type="entry name" value="P-loop_NTPase"/>
</dbReference>
<dbReference type="NCBIfam" id="TIGR00152">
    <property type="entry name" value="dephospho-CoA kinase"/>
    <property type="match status" value="1"/>
</dbReference>
<dbReference type="PANTHER" id="PTHR10695:SF46">
    <property type="entry name" value="BIFUNCTIONAL COENZYME A SYNTHASE-RELATED"/>
    <property type="match status" value="1"/>
</dbReference>
<dbReference type="PANTHER" id="PTHR10695">
    <property type="entry name" value="DEPHOSPHO-COA KINASE-RELATED"/>
    <property type="match status" value="1"/>
</dbReference>
<dbReference type="Pfam" id="PF01121">
    <property type="entry name" value="CoaE"/>
    <property type="match status" value="1"/>
</dbReference>
<dbReference type="SUPFAM" id="SSF52540">
    <property type="entry name" value="P-loop containing nucleoside triphosphate hydrolases"/>
    <property type="match status" value="1"/>
</dbReference>
<dbReference type="PROSITE" id="PS51219">
    <property type="entry name" value="DPCK"/>
    <property type="match status" value="1"/>
</dbReference>
<reference key="1">
    <citation type="journal article" date="1995" name="Science">
        <title>Whole-genome random sequencing and assembly of Haemophilus influenzae Rd.</title>
        <authorList>
            <person name="Fleischmann R.D."/>
            <person name="Adams M.D."/>
            <person name="White O."/>
            <person name="Clayton R.A."/>
            <person name="Kirkness E.F."/>
            <person name="Kerlavage A.R."/>
            <person name="Bult C.J."/>
            <person name="Tomb J.-F."/>
            <person name="Dougherty B.A."/>
            <person name="Merrick J.M."/>
            <person name="McKenney K."/>
            <person name="Sutton G.G."/>
            <person name="FitzHugh W."/>
            <person name="Fields C.A."/>
            <person name="Gocayne J.D."/>
            <person name="Scott J.D."/>
            <person name="Shirley R."/>
            <person name="Liu L.-I."/>
            <person name="Glodek A."/>
            <person name="Kelley J.M."/>
            <person name="Weidman J.F."/>
            <person name="Phillips C.A."/>
            <person name="Spriggs T."/>
            <person name="Hedblom E."/>
            <person name="Cotton M.D."/>
            <person name="Utterback T.R."/>
            <person name="Hanna M.C."/>
            <person name="Nguyen D.T."/>
            <person name="Saudek D.M."/>
            <person name="Brandon R.C."/>
            <person name="Fine L.D."/>
            <person name="Fritchman J.L."/>
            <person name="Fuhrmann J.L."/>
            <person name="Geoghagen N.S.M."/>
            <person name="Gnehm C.L."/>
            <person name="McDonald L.A."/>
            <person name="Small K.V."/>
            <person name="Fraser C.M."/>
            <person name="Smith H.O."/>
            <person name="Venter J.C."/>
        </authorList>
    </citation>
    <scope>NUCLEOTIDE SEQUENCE [LARGE SCALE GENOMIC DNA]</scope>
    <source>
        <strain>ATCC 51907 / DSM 11121 / KW20 / Rd</strain>
    </source>
</reference>
<protein>
    <recommendedName>
        <fullName evidence="1">Dephospho-CoA kinase</fullName>
        <ecNumber evidence="1">2.7.1.24</ecNumber>
    </recommendedName>
    <alternativeName>
        <fullName evidence="1">Dephosphocoenzyme A kinase</fullName>
    </alternativeName>
</protein>